<comment type="function">
    <text evidence="1">Acts as a component of the peripheral membrane COG complex that is involved in intra-Golgi protein trafficking. COG is located at the cis- Golgi, and regulates tethering of retrograde intra-Golgi vesicles and possibly a number of other membrane trafficking events (By similarity).</text>
</comment>
<comment type="subunit">
    <text evidence="1">Component of the conserved oligomeric Golgi (COG or Sec34/Sec35) complex which consists of eight different proteins cog1-cog8.</text>
</comment>
<comment type="subcellular location">
    <subcellularLocation>
        <location evidence="1">Golgi apparatus membrane</location>
        <topology evidence="1">Peripheral membrane protein</topology>
        <orientation evidence="1">Cytoplasmic side</orientation>
    </subcellularLocation>
    <text evidence="2">Localizes at the barrier septum.</text>
</comment>
<comment type="similarity">
    <text evidence="3">Belongs to the COG3 family.</text>
</comment>
<protein>
    <recommendedName>
        <fullName>Conserved oligomeric Golgi complex subunit 3</fullName>
        <shortName>COG complex subunit 3</shortName>
    </recommendedName>
    <alternativeName>
        <fullName>Component of oligomeric Golgi complex 3</fullName>
    </alternativeName>
</protein>
<dbReference type="EMBL" id="CU329671">
    <property type="protein sequence ID" value="CAB51337.1"/>
    <property type="molecule type" value="Genomic_DNA"/>
</dbReference>
<dbReference type="PIR" id="T39464">
    <property type="entry name" value="T39464"/>
</dbReference>
<dbReference type="RefSeq" id="NP_596819.1">
    <property type="nucleotide sequence ID" value="NM_001023839.2"/>
</dbReference>
<dbReference type="SMR" id="Q9Y7Z4"/>
<dbReference type="BioGRID" id="276310">
    <property type="interactions" value="1"/>
</dbReference>
<dbReference type="FunCoup" id="Q9Y7Z4">
    <property type="interactions" value="704"/>
</dbReference>
<dbReference type="STRING" id="284812.Q9Y7Z4"/>
<dbReference type="iPTMnet" id="Q9Y7Z4"/>
<dbReference type="PaxDb" id="4896-SPBC1539.05.1"/>
<dbReference type="EnsemblFungi" id="SPBC1539.05.1">
    <property type="protein sequence ID" value="SPBC1539.05.1:pep"/>
    <property type="gene ID" value="SPBC1539.05"/>
</dbReference>
<dbReference type="GeneID" id="2539758"/>
<dbReference type="KEGG" id="spo:2539758"/>
<dbReference type="PomBase" id="SPBC1539.05">
    <property type="gene designation" value="cog3"/>
</dbReference>
<dbReference type="VEuPathDB" id="FungiDB:SPBC1539.05"/>
<dbReference type="eggNOG" id="KOG2604">
    <property type="taxonomic scope" value="Eukaryota"/>
</dbReference>
<dbReference type="HOGENOM" id="CLU_011639_0_0_1"/>
<dbReference type="InParanoid" id="Q9Y7Z4"/>
<dbReference type="OMA" id="DEFELWG"/>
<dbReference type="PhylomeDB" id="Q9Y7Z4"/>
<dbReference type="PRO" id="PR:Q9Y7Z4"/>
<dbReference type="Proteomes" id="UP000002485">
    <property type="component" value="Chromosome II"/>
</dbReference>
<dbReference type="GO" id="GO:0032153">
    <property type="term" value="C:cell division site"/>
    <property type="evidence" value="ECO:0007005"/>
    <property type="project" value="PomBase"/>
</dbReference>
<dbReference type="GO" id="GO:0005801">
    <property type="term" value="C:cis-Golgi network"/>
    <property type="evidence" value="ECO:0007669"/>
    <property type="project" value="InterPro"/>
</dbReference>
<dbReference type="GO" id="GO:0005737">
    <property type="term" value="C:cytoplasm"/>
    <property type="evidence" value="ECO:0007005"/>
    <property type="project" value="PomBase"/>
</dbReference>
<dbReference type="GO" id="GO:0000139">
    <property type="term" value="C:Golgi membrane"/>
    <property type="evidence" value="ECO:0007669"/>
    <property type="project" value="UniProtKB-SubCell"/>
</dbReference>
<dbReference type="GO" id="GO:0017119">
    <property type="term" value="C:Golgi transport complex"/>
    <property type="evidence" value="ECO:0000318"/>
    <property type="project" value="GO_Central"/>
</dbReference>
<dbReference type="GO" id="GO:0007030">
    <property type="term" value="P:Golgi organization"/>
    <property type="evidence" value="ECO:0000318"/>
    <property type="project" value="GO_Central"/>
</dbReference>
<dbReference type="GO" id="GO:0006891">
    <property type="term" value="P:intra-Golgi vesicle-mediated transport"/>
    <property type="evidence" value="ECO:0000318"/>
    <property type="project" value="GO_Central"/>
</dbReference>
<dbReference type="GO" id="GO:0006886">
    <property type="term" value="P:intracellular protein transport"/>
    <property type="evidence" value="ECO:0000250"/>
    <property type="project" value="PomBase"/>
</dbReference>
<dbReference type="InterPro" id="IPR048685">
    <property type="entry name" value="COG3_C"/>
</dbReference>
<dbReference type="InterPro" id="IPR048320">
    <property type="entry name" value="COG3_N"/>
</dbReference>
<dbReference type="InterPro" id="IPR007265">
    <property type="entry name" value="COG_su3"/>
</dbReference>
<dbReference type="PANTHER" id="PTHR13302">
    <property type="entry name" value="CONSERVED OLIGOMERIC GOLGI COMPLEX COMPONENT 3"/>
    <property type="match status" value="1"/>
</dbReference>
<dbReference type="PANTHER" id="PTHR13302:SF8">
    <property type="entry name" value="CONSERVED OLIGOMERIC GOLGI COMPLEX SUBUNIT 3"/>
    <property type="match status" value="1"/>
</dbReference>
<dbReference type="Pfam" id="PF20671">
    <property type="entry name" value="COG3_C"/>
    <property type="match status" value="1"/>
</dbReference>
<dbReference type="Pfam" id="PF04136">
    <property type="entry name" value="COG3_N"/>
    <property type="match status" value="1"/>
</dbReference>
<evidence type="ECO:0000250" key="1"/>
<evidence type="ECO:0000269" key="2">
    <source>
    </source>
</evidence>
<evidence type="ECO:0000305" key="3"/>
<name>COG3_SCHPO</name>
<proteinExistence type="inferred from homology"/>
<reference key="1">
    <citation type="journal article" date="2002" name="Nature">
        <title>The genome sequence of Schizosaccharomyces pombe.</title>
        <authorList>
            <person name="Wood V."/>
            <person name="Gwilliam R."/>
            <person name="Rajandream M.A."/>
            <person name="Lyne M.H."/>
            <person name="Lyne R."/>
            <person name="Stewart A."/>
            <person name="Sgouros J.G."/>
            <person name="Peat N."/>
            <person name="Hayles J."/>
            <person name="Baker S.G."/>
            <person name="Basham D."/>
            <person name="Bowman S."/>
            <person name="Brooks K."/>
            <person name="Brown D."/>
            <person name="Brown S."/>
            <person name="Chillingworth T."/>
            <person name="Churcher C.M."/>
            <person name="Collins M."/>
            <person name="Connor R."/>
            <person name="Cronin A."/>
            <person name="Davis P."/>
            <person name="Feltwell T."/>
            <person name="Fraser A."/>
            <person name="Gentles S."/>
            <person name="Goble A."/>
            <person name="Hamlin N."/>
            <person name="Harris D.E."/>
            <person name="Hidalgo J."/>
            <person name="Hodgson G."/>
            <person name="Holroyd S."/>
            <person name="Hornsby T."/>
            <person name="Howarth S."/>
            <person name="Huckle E.J."/>
            <person name="Hunt S."/>
            <person name="Jagels K."/>
            <person name="James K.D."/>
            <person name="Jones L."/>
            <person name="Jones M."/>
            <person name="Leather S."/>
            <person name="McDonald S."/>
            <person name="McLean J."/>
            <person name="Mooney P."/>
            <person name="Moule S."/>
            <person name="Mungall K.L."/>
            <person name="Murphy L.D."/>
            <person name="Niblett D."/>
            <person name="Odell C."/>
            <person name="Oliver K."/>
            <person name="O'Neil S."/>
            <person name="Pearson D."/>
            <person name="Quail M.A."/>
            <person name="Rabbinowitsch E."/>
            <person name="Rutherford K.M."/>
            <person name="Rutter S."/>
            <person name="Saunders D."/>
            <person name="Seeger K."/>
            <person name="Sharp S."/>
            <person name="Skelton J."/>
            <person name="Simmonds M.N."/>
            <person name="Squares R."/>
            <person name="Squares S."/>
            <person name="Stevens K."/>
            <person name="Taylor K."/>
            <person name="Taylor R.G."/>
            <person name="Tivey A."/>
            <person name="Walsh S.V."/>
            <person name="Warren T."/>
            <person name="Whitehead S."/>
            <person name="Woodward J.R."/>
            <person name="Volckaert G."/>
            <person name="Aert R."/>
            <person name="Robben J."/>
            <person name="Grymonprez B."/>
            <person name="Weltjens I."/>
            <person name="Vanstreels E."/>
            <person name="Rieger M."/>
            <person name="Schaefer M."/>
            <person name="Mueller-Auer S."/>
            <person name="Gabel C."/>
            <person name="Fuchs M."/>
            <person name="Duesterhoeft A."/>
            <person name="Fritzc C."/>
            <person name="Holzer E."/>
            <person name="Moestl D."/>
            <person name="Hilbert H."/>
            <person name="Borzym K."/>
            <person name="Langer I."/>
            <person name="Beck A."/>
            <person name="Lehrach H."/>
            <person name="Reinhardt R."/>
            <person name="Pohl T.M."/>
            <person name="Eger P."/>
            <person name="Zimmermann W."/>
            <person name="Wedler H."/>
            <person name="Wambutt R."/>
            <person name="Purnelle B."/>
            <person name="Goffeau A."/>
            <person name="Cadieu E."/>
            <person name="Dreano S."/>
            <person name="Gloux S."/>
            <person name="Lelaure V."/>
            <person name="Mottier S."/>
            <person name="Galibert F."/>
            <person name="Aves S.J."/>
            <person name="Xiang Z."/>
            <person name="Hunt C."/>
            <person name="Moore K."/>
            <person name="Hurst S.M."/>
            <person name="Lucas M."/>
            <person name="Rochet M."/>
            <person name="Gaillardin C."/>
            <person name="Tallada V.A."/>
            <person name="Garzon A."/>
            <person name="Thode G."/>
            <person name="Daga R.R."/>
            <person name="Cruzado L."/>
            <person name="Jimenez J."/>
            <person name="Sanchez M."/>
            <person name="del Rey F."/>
            <person name="Benito J."/>
            <person name="Dominguez A."/>
            <person name="Revuelta J.L."/>
            <person name="Moreno S."/>
            <person name="Armstrong J."/>
            <person name="Forsburg S.L."/>
            <person name="Cerutti L."/>
            <person name="Lowe T."/>
            <person name="McCombie W.R."/>
            <person name="Paulsen I."/>
            <person name="Potashkin J."/>
            <person name="Shpakovski G.V."/>
            <person name="Ussery D."/>
            <person name="Barrell B.G."/>
            <person name="Nurse P."/>
        </authorList>
    </citation>
    <scope>NUCLEOTIDE SEQUENCE [LARGE SCALE GENOMIC DNA]</scope>
    <source>
        <strain>972 / ATCC 24843</strain>
    </source>
</reference>
<reference key="2">
    <citation type="journal article" date="2006" name="Nat. Biotechnol.">
        <title>ORFeome cloning and global analysis of protein localization in the fission yeast Schizosaccharomyces pombe.</title>
        <authorList>
            <person name="Matsuyama A."/>
            <person name="Arai R."/>
            <person name="Yashiroda Y."/>
            <person name="Shirai A."/>
            <person name="Kamata A."/>
            <person name="Sekido S."/>
            <person name="Kobayashi Y."/>
            <person name="Hashimoto A."/>
            <person name="Hamamoto M."/>
            <person name="Hiraoka Y."/>
            <person name="Horinouchi S."/>
            <person name="Yoshida M."/>
        </authorList>
    </citation>
    <scope>SUBCELLULAR LOCATION [LARGE SCALE ANALYSIS]</scope>
</reference>
<sequence>MFDQLEFYPAVNYEDNETQNDIKLPEVAKLENIETVHSISKERRDSLTEILNDSSSLPARPFSLPNPNNSTVEKQSLFPFEEKMNPIWIISRPTFSIEQDAEKKINELQTFTNIIDQILGQTNNIESTLLSMKEKFESSEKKLSEFSEMCENLSTDEMRFSEIADGIRKGLTIFAPLKELTRVFRHPPPDFAGKVSFKEHITQLNTCIMFLEENLDFQESPHYLGQYKKLLSQAMDIFKPYFIRIIKQTTDQVLKDSKKMDVHKQLHSSLFYARFSAVGHNLCPTITELCKLCSKESLDAFLPAFYDVYFQCRTRLLKPVLDYHLKSFFMEKSISSYIQKSLALLQLTFFDENKLFREILIMDDFRFMHYWNNLCQSFFENSRSLILHEKNLTELCEVCSYIQSFQNAILEGEREDVDKKVVEFLNPLVLELQERLLFVVQTAIETDIQRYSPTEEDLNPIADDKSLLFDLEKLRLNNDEEKLDPDVPQKLAMAQGWYPVVQKSLIILSKIYRLVNSQVFDEIALELVHSCIRSLVDAYRYFSRNNDKQLARLFLIKNFLVLKDQLNSFDIHYACIEAGVDLRKVWDSVREWRSNLRGVLQLVYETFPKFITNAVDTRQELNQQLRVAVNGYIETAVIHYTECLSIGNLESITEFQNRIQKFPELRQQISLYLSETWIIELFLQAIREEVVSKFQNFYESIVANEDITGSDHNKSGTTSLKHLNEYVEDIYSVMS</sequence>
<gene>
    <name type="primary">cog3</name>
    <name type="ORF">SPBC1539.05</name>
</gene>
<accession>Q9Y7Z4</accession>
<organism>
    <name type="scientific">Schizosaccharomyces pombe (strain 972 / ATCC 24843)</name>
    <name type="common">Fission yeast</name>
    <dbReference type="NCBI Taxonomy" id="284812"/>
    <lineage>
        <taxon>Eukaryota</taxon>
        <taxon>Fungi</taxon>
        <taxon>Dikarya</taxon>
        <taxon>Ascomycota</taxon>
        <taxon>Taphrinomycotina</taxon>
        <taxon>Schizosaccharomycetes</taxon>
        <taxon>Schizosaccharomycetales</taxon>
        <taxon>Schizosaccharomycetaceae</taxon>
        <taxon>Schizosaccharomyces</taxon>
    </lineage>
</organism>
<feature type="chain" id="PRO_0000316217" description="Conserved oligomeric Golgi complex subunit 3">
    <location>
        <begin position="1"/>
        <end position="735"/>
    </location>
</feature>
<keyword id="KW-0333">Golgi apparatus</keyword>
<keyword id="KW-0472">Membrane</keyword>
<keyword id="KW-0653">Protein transport</keyword>
<keyword id="KW-1185">Reference proteome</keyword>
<keyword id="KW-0813">Transport</keyword>